<protein>
    <recommendedName>
        <fullName evidence="2">Large ribosomal subunit protein bL27</fullName>
    </recommendedName>
    <alternativeName>
        <fullName evidence="4">50S ribosomal protein L27</fullName>
    </alternativeName>
</protein>
<gene>
    <name evidence="2" type="primary">rpmA</name>
    <name type="ordered locus">LL1081</name>
    <name type="ORF">L0421</name>
</gene>
<accession>Q9CGL5</accession>
<name>RL27_LACLA</name>
<feature type="propeptide" id="PRO_0000459907" evidence="1">
    <location>
        <begin position="1"/>
        <end position="9"/>
    </location>
</feature>
<feature type="chain" id="PRO_0000181104" description="Large ribosomal subunit protein bL27">
    <location>
        <begin position="10"/>
        <end position="94"/>
    </location>
</feature>
<feature type="region of interest" description="Disordered" evidence="3">
    <location>
        <begin position="12"/>
        <end position="33"/>
    </location>
</feature>
<evidence type="ECO:0000250" key="1">
    <source>
        <dbReference type="UniProtKB" id="Q2FXT0"/>
    </source>
</evidence>
<evidence type="ECO:0000255" key="2">
    <source>
        <dbReference type="HAMAP-Rule" id="MF_00539"/>
    </source>
</evidence>
<evidence type="ECO:0000256" key="3">
    <source>
        <dbReference type="SAM" id="MobiDB-lite"/>
    </source>
</evidence>
<evidence type="ECO:0000305" key="4"/>
<comment type="PTM">
    <text evidence="1">The N-terminus is cleaved by ribosomal processing cysteine protease Prp.</text>
</comment>
<comment type="similarity">
    <text evidence="2">Belongs to the bacterial ribosomal protein bL27 family.</text>
</comment>
<organism>
    <name type="scientific">Lactococcus lactis subsp. lactis (strain IL1403)</name>
    <name type="common">Streptococcus lactis</name>
    <dbReference type="NCBI Taxonomy" id="272623"/>
    <lineage>
        <taxon>Bacteria</taxon>
        <taxon>Bacillati</taxon>
        <taxon>Bacillota</taxon>
        <taxon>Bacilli</taxon>
        <taxon>Lactobacillales</taxon>
        <taxon>Streptococcaceae</taxon>
        <taxon>Lactococcus</taxon>
    </lineage>
</organism>
<proteinExistence type="inferred from homology"/>
<sequence length="94" mass="10056">MLELNLQLFAHKKGGGSTSNGRDSQAKRLGAKASDGELVSGGSILFRQRGTHIHPGTNVGRGGDHTLFAKIEGTVKFEMKRGKKHVSVYPVVAK</sequence>
<reference key="1">
    <citation type="journal article" date="2001" name="Genome Res.">
        <title>The complete genome sequence of the lactic acid bacterium Lactococcus lactis ssp. lactis IL1403.</title>
        <authorList>
            <person name="Bolotin A."/>
            <person name="Wincker P."/>
            <person name="Mauger S."/>
            <person name="Jaillon O."/>
            <person name="Malarme K."/>
            <person name="Weissenbach J."/>
            <person name="Ehrlich S.D."/>
            <person name="Sorokin A."/>
        </authorList>
    </citation>
    <scope>NUCLEOTIDE SEQUENCE [LARGE SCALE GENOMIC DNA]</scope>
    <source>
        <strain>IL1403</strain>
    </source>
</reference>
<dbReference type="EMBL" id="AE005176">
    <property type="protein sequence ID" value="AAK05179.1"/>
    <property type="molecule type" value="Genomic_DNA"/>
</dbReference>
<dbReference type="PIR" id="A86760">
    <property type="entry name" value="A86760"/>
</dbReference>
<dbReference type="RefSeq" id="NP_267237.1">
    <property type="nucleotide sequence ID" value="NC_002662.1"/>
</dbReference>
<dbReference type="RefSeq" id="WP_010905747.1">
    <property type="nucleotide sequence ID" value="NC_002662.1"/>
</dbReference>
<dbReference type="SMR" id="Q9CGL5"/>
<dbReference type="PaxDb" id="272623-L0421"/>
<dbReference type="EnsemblBacteria" id="AAK05179">
    <property type="protein sequence ID" value="AAK05179"/>
    <property type="gene ID" value="L0421"/>
</dbReference>
<dbReference type="KEGG" id="lla:L0421"/>
<dbReference type="PATRIC" id="fig|272623.7.peg.1159"/>
<dbReference type="eggNOG" id="COG0211">
    <property type="taxonomic scope" value="Bacteria"/>
</dbReference>
<dbReference type="HOGENOM" id="CLU_095424_4_0_9"/>
<dbReference type="OrthoDB" id="9803474at2"/>
<dbReference type="Proteomes" id="UP000002196">
    <property type="component" value="Chromosome"/>
</dbReference>
<dbReference type="GO" id="GO:0022625">
    <property type="term" value="C:cytosolic large ribosomal subunit"/>
    <property type="evidence" value="ECO:0007669"/>
    <property type="project" value="TreeGrafter"/>
</dbReference>
<dbReference type="GO" id="GO:0003735">
    <property type="term" value="F:structural constituent of ribosome"/>
    <property type="evidence" value="ECO:0007669"/>
    <property type="project" value="InterPro"/>
</dbReference>
<dbReference type="GO" id="GO:0006412">
    <property type="term" value="P:translation"/>
    <property type="evidence" value="ECO:0007669"/>
    <property type="project" value="UniProtKB-UniRule"/>
</dbReference>
<dbReference type="FunFam" id="2.40.50.100:FF:000004">
    <property type="entry name" value="50S ribosomal protein L27"/>
    <property type="match status" value="1"/>
</dbReference>
<dbReference type="Gene3D" id="2.40.50.100">
    <property type="match status" value="1"/>
</dbReference>
<dbReference type="HAMAP" id="MF_00539">
    <property type="entry name" value="Ribosomal_bL27"/>
    <property type="match status" value="1"/>
</dbReference>
<dbReference type="InterPro" id="IPR001684">
    <property type="entry name" value="Ribosomal_bL27"/>
</dbReference>
<dbReference type="InterPro" id="IPR018261">
    <property type="entry name" value="Ribosomal_bL27_CS"/>
</dbReference>
<dbReference type="NCBIfam" id="TIGR00062">
    <property type="entry name" value="L27"/>
    <property type="match status" value="1"/>
</dbReference>
<dbReference type="PANTHER" id="PTHR15893:SF0">
    <property type="entry name" value="LARGE RIBOSOMAL SUBUNIT PROTEIN BL27M"/>
    <property type="match status" value="1"/>
</dbReference>
<dbReference type="PANTHER" id="PTHR15893">
    <property type="entry name" value="RIBOSOMAL PROTEIN L27"/>
    <property type="match status" value="1"/>
</dbReference>
<dbReference type="Pfam" id="PF01016">
    <property type="entry name" value="Ribosomal_L27"/>
    <property type="match status" value="1"/>
</dbReference>
<dbReference type="PRINTS" id="PR00063">
    <property type="entry name" value="RIBOSOMALL27"/>
</dbReference>
<dbReference type="SUPFAM" id="SSF110324">
    <property type="entry name" value="Ribosomal L27 protein-like"/>
    <property type="match status" value="1"/>
</dbReference>
<dbReference type="PROSITE" id="PS00831">
    <property type="entry name" value="RIBOSOMAL_L27"/>
    <property type="match status" value="1"/>
</dbReference>
<keyword id="KW-1185">Reference proteome</keyword>
<keyword id="KW-0687">Ribonucleoprotein</keyword>
<keyword id="KW-0689">Ribosomal protein</keyword>